<organism>
    <name type="scientific">Xanthomonas axonopodis pv. citri (strain 306)</name>
    <dbReference type="NCBI Taxonomy" id="190486"/>
    <lineage>
        <taxon>Bacteria</taxon>
        <taxon>Pseudomonadati</taxon>
        <taxon>Pseudomonadota</taxon>
        <taxon>Gammaproteobacteria</taxon>
        <taxon>Lysobacterales</taxon>
        <taxon>Lysobacteraceae</taxon>
        <taxon>Xanthomonas</taxon>
    </lineage>
</organism>
<comment type="function">
    <text evidence="1">ATPase subunit of a proteasome-like degradation complex; this subunit has chaperone activity. The binding of ATP and its subsequent hydrolysis by HslU are essential for unfolding of protein substrates subsequently hydrolyzed by HslV. HslU recognizes the N-terminal part of its protein substrates and unfolds these before they are guided to HslV for hydrolysis.</text>
</comment>
<comment type="subunit">
    <text evidence="1">A double ring-shaped homohexamer of HslV is capped on each side by a ring-shaped HslU homohexamer. The assembly of the HslU/HslV complex is dependent on binding of ATP.</text>
</comment>
<comment type="subcellular location">
    <subcellularLocation>
        <location evidence="1">Cytoplasm</location>
    </subcellularLocation>
</comment>
<comment type="similarity">
    <text evidence="1">Belongs to the ClpX chaperone family. HslU subfamily.</text>
</comment>
<proteinExistence type="inferred from homology"/>
<accession>Q8PPP7</accession>
<keyword id="KW-0067">ATP-binding</keyword>
<keyword id="KW-0143">Chaperone</keyword>
<keyword id="KW-0963">Cytoplasm</keyword>
<keyword id="KW-0547">Nucleotide-binding</keyword>
<reference key="1">
    <citation type="journal article" date="2002" name="Nature">
        <title>Comparison of the genomes of two Xanthomonas pathogens with differing host specificities.</title>
        <authorList>
            <person name="da Silva A.C.R."/>
            <person name="Ferro J.A."/>
            <person name="Reinach F.C."/>
            <person name="Farah C.S."/>
            <person name="Furlan L.R."/>
            <person name="Quaggio R.B."/>
            <person name="Monteiro-Vitorello C.B."/>
            <person name="Van Sluys M.A."/>
            <person name="Almeida N.F. Jr."/>
            <person name="Alves L.M.C."/>
            <person name="do Amaral A.M."/>
            <person name="Bertolini M.C."/>
            <person name="Camargo L.E.A."/>
            <person name="Camarotte G."/>
            <person name="Cannavan F."/>
            <person name="Cardozo J."/>
            <person name="Chambergo F."/>
            <person name="Ciapina L.P."/>
            <person name="Cicarelli R.M.B."/>
            <person name="Coutinho L.L."/>
            <person name="Cursino-Santos J.R."/>
            <person name="El-Dorry H."/>
            <person name="Faria J.B."/>
            <person name="Ferreira A.J.S."/>
            <person name="Ferreira R.C.C."/>
            <person name="Ferro M.I.T."/>
            <person name="Formighieri E.F."/>
            <person name="Franco M.C."/>
            <person name="Greggio C.C."/>
            <person name="Gruber A."/>
            <person name="Katsuyama A.M."/>
            <person name="Kishi L.T."/>
            <person name="Leite R.P."/>
            <person name="Lemos E.G.M."/>
            <person name="Lemos M.V.F."/>
            <person name="Locali E.C."/>
            <person name="Machado M.A."/>
            <person name="Madeira A.M.B.N."/>
            <person name="Martinez-Rossi N.M."/>
            <person name="Martins E.C."/>
            <person name="Meidanis J."/>
            <person name="Menck C.F.M."/>
            <person name="Miyaki C.Y."/>
            <person name="Moon D.H."/>
            <person name="Moreira L.M."/>
            <person name="Novo M.T.M."/>
            <person name="Okura V.K."/>
            <person name="Oliveira M.C."/>
            <person name="Oliveira V.R."/>
            <person name="Pereira H.A."/>
            <person name="Rossi A."/>
            <person name="Sena J.A.D."/>
            <person name="Silva C."/>
            <person name="de Souza R.F."/>
            <person name="Spinola L.A.F."/>
            <person name="Takita M.A."/>
            <person name="Tamura R.E."/>
            <person name="Teixeira E.C."/>
            <person name="Tezza R.I.D."/>
            <person name="Trindade dos Santos M."/>
            <person name="Truffi D."/>
            <person name="Tsai S.M."/>
            <person name="White F.F."/>
            <person name="Setubal J.C."/>
            <person name="Kitajima J.P."/>
        </authorList>
    </citation>
    <scope>NUCLEOTIDE SEQUENCE [LARGE SCALE GENOMIC DNA]</scope>
    <source>
        <strain>306</strain>
    </source>
</reference>
<sequence length="455" mass="50713">MPNIDTATMTPREIVQELDRHIVGQHDAKRAVAIALRNRWRRMQLPEELRNEVMPKNILMIGPTGVGKTEIARRLATLANAPFVKVEATRFTEVGYVGKDVEQIIRDLADTAVKLYREQAKVRVRNQAEERAEDRILDALLPRRATGIGFDPEAARNEPSSQDNDTRIKFRRMLRNGELDEREIELEVAVNASMDIMTPPGMEEMGQQLRQMFSNLGSGKSQKRKLTIKAARPLLIEEEAGKLVNEDDVRTAAIEACEQHGIVFIDEIDKVAKRGEAGSSGGDVSREGVQRDLLPLVEGSNVSTKYGTVKTDHILFIASGAFHLAKPSDLIPELQGRFPIRVELTALTKADFVRILTEPKAALIKQYEALLQTEGVALTFASDAVDRLAEIAAQVNERQENIGARRLHTVLERLLDVLSYEAPDRDGQSVTVDAAYVDAQLGELVQDPDLSRYIL</sequence>
<evidence type="ECO:0000255" key="1">
    <source>
        <dbReference type="HAMAP-Rule" id="MF_00249"/>
    </source>
</evidence>
<protein>
    <recommendedName>
        <fullName evidence="1">ATP-dependent protease ATPase subunit HslU</fullName>
    </recommendedName>
    <alternativeName>
        <fullName evidence="1">Unfoldase HslU</fullName>
    </alternativeName>
</protein>
<feature type="chain" id="PRO_0000160563" description="ATP-dependent protease ATPase subunit HslU">
    <location>
        <begin position="1"/>
        <end position="455"/>
    </location>
</feature>
<feature type="binding site" evidence="1">
    <location>
        <position position="23"/>
    </location>
    <ligand>
        <name>ATP</name>
        <dbReference type="ChEBI" id="CHEBI:30616"/>
    </ligand>
</feature>
<feature type="binding site" evidence="1">
    <location>
        <begin position="65"/>
        <end position="70"/>
    </location>
    <ligand>
        <name>ATP</name>
        <dbReference type="ChEBI" id="CHEBI:30616"/>
    </ligand>
</feature>
<feature type="binding site" evidence="1">
    <location>
        <position position="266"/>
    </location>
    <ligand>
        <name>ATP</name>
        <dbReference type="ChEBI" id="CHEBI:30616"/>
    </ligand>
</feature>
<feature type="binding site" evidence="1">
    <location>
        <position position="333"/>
    </location>
    <ligand>
        <name>ATP</name>
        <dbReference type="ChEBI" id="CHEBI:30616"/>
    </ligand>
</feature>
<feature type="binding site" evidence="1">
    <location>
        <position position="405"/>
    </location>
    <ligand>
        <name>ATP</name>
        <dbReference type="ChEBI" id="CHEBI:30616"/>
    </ligand>
</feature>
<dbReference type="EMBL" id="AE008923">
    <property type="protein sequence ID" value="AAM35527.1"/>
    <property type="molecule type" value="Genomic_DNA"/>
</dbReference>
<dbReference type="RefSeq" id="WP_003482762.1">
    <property type="nucleotide sequence ID" value="NC_003919.1"/>
</dbReference>
<dbReference type="SMR" id="Q8PPP7"/>
<dbReference type="GeneID" id="66909836"/>
<dbReference type="KEGG" id="xac:XAC0638"/>
<dbReference type="eggNOG" id="COG1220">
    <property type="taxonomic scope" value="Bacteria"/>
</dbReference>
<dbReference type="HOGENOM" id="CLU_033123_0_0_6"/>
<dbReference type="Proteomes" id="UP000000576">
    <property type="component" value="Chromosome"/>
</dbReference>
<dbReference type="GO" id="GO:0009376">
    <property type="term" value="C:HslUV protease complex"/>
    <property type="evidence" value="ECO:0007669"/>
    <property type="project" value="UniProtKB-UniRule"/>
</dbReference>
<dbReference type="GO" id="GO:0005524">
    <property type="term" value="F:ATP binding"/>
    <property type="evidence" value="ECO:0007669"/>
    <property type="project" value="UniProtKB-UniRule"/>
</dbReference>
<dbReference type="GO" id="GO:0016887">
    <property type="term" value="F:ATP hydrolysis activity"/>
    <property type="evidence" value="ECO:0007669"/>
    <property type="project" value="InterPro"/>
</dbReference>
<dbReference type="GO" id="GO:0008233">
    <property type="term" value="F:peptidase activity"/>
    <property type="evidence" value="ECO:0007669"/>
    <property type="project" value="InterPro"/>
</dbReference>
<dbReference type="GO" id="GO:0036402">
    <property type="term" value="F:proteasome-activating activity"/>
    <property type="evidence" value="ECO:0007669"/>
    <property type="project" value="UniProtKB-UniRule"/>
</dbReference>
<dbReference type="GO" id="GO:0043335">
    <property type="term" value="P:protein unfolding"/>
    <property type="evidence" value="ECO:0007669"/>
    <property type="project" value="UniProtKB-UniRule"/>
</dbReference>
<dbReference type="GO" id="GO:0051603">
    <property type="term" value="P:proteolysis involved in protein catabolic process"/>
    <property type="evidence" value="ECO:0007669"/>
    <property type="project" value="TreeGrafter"/>
</dbReference>
<dbReference type="CDD" id="cd19498">
    <property type="entry name" value="RecA-like_HslU"/>
    <property type="match status" value="1"/>
</dbReference>
<dbReference type="FunFam" id="3.40.50.300:FF:000213">
    <property type="entry name" value="ATP-dependent protease ATPase subunit HslU"/>
    <property type="match status" value="1"/>
</dbReference>
<dbReference type="FunFam" id="3.40.50.300:FF:000220">
    <property type="entry name" value="ATP-dependent protease ATPase subunit HslU"/>
    <property type="match status" value="1"/>
</dbReference>
<dbReference type="Gene3D" id="1.10.8.60">
    <property type="match status" value="1"/>
</dbReference>
<dbReference type="Gene3D" id="1.10.8.10">
    <property type="entry name" value="DNA helicase RuvA subunit, C-terminal domain"/>
    <property type="match status" value="2"/>
</dbReference>
<dbReference type="Gene3D" id="3.40.50.300">
    <property type="entry name" value="P-loop containing nucleotide triphosphate hydrolases"/>
    <property type="match status" value="2"/>
</dbReference>
<dbReference type="HAMAP" id="MF_00249">
    <property type="entry name" value="HslU"/>
    <property type="match status" value="1"/>
</dbReference>
<dbReference type="InterPro" id="IPR003593">
    <property type="entry name" value="AAA+_ATPase"/>
</dbReference>
<dbReference type="InterPro" id="IPR050052">
    <property type="entry name" value="ATP-dep_Clp_protease_ClpX"/>
</dbReference>
<dbReference type="InterPro" id="IPR003959">
    <property type="entry name" value="ATPase_AAA_core"/>
</dbReference>
<dbReference type="InterPro" id="IPR019489">
    <property type="entry name" value="Clp_ATPase_C"/>
</dbReference>
<dbReference type="InterPro" id="IPR004491">
    <property type="entry name" value="HslU"/>
</dbReference>
<dbReference type="InterPro" id="IPR027417">
    <property type="entry name" value="P-loop_NTPase"/>
</dbReference>
<dbReference type="NCBIfam" id="TIGR00390">
    <property type="entry name" value="hslU"/>
    <property type="match status" value="1"/>
</dbReference>
<dbReference type="NCBIfam" id="NF003544">
    <property type="entry name" value="PRK05201.1"/>
    <property type="match status" value="1"/>
</dbReference>
<dbReference type="PANTHER" id="PTHR48102">
    <property type="entry name" value="ATP-DEPENDENT CLP PROTEASE ATP-BINDING SUBUNIT CLPX-LIKE, MITOCHONDRIAL-RELATED"/>
    <property type="match status" value="1"/>
</dbReference>
<dbReference type="PANTHER" id="PTHR48102:SF3">
    <property type="entry name" value="ATP-DEPENDENT PROTEASE ATPASE SUBUNIT HSLU"/>
    <property type="match status" value="1"/>
</dbReference>
<dbReference type="Pfam" id="PF00004">
    <property type="entry name" value="AAA"/>
    <property type="match status" value="1"/>
</dbReference>
<dbReference type="Pfam" id="PF07724">
    <property type="entry name" value="AAA_2"/>
    <property type="match status" value="1"/>
</dbReference>
<dbReference type="SMART" id="SM00382">
    <property type="entry name" value="AAA"/>
    <property type="match status" value="1"/>
</dbReference>
<dbReference type="SMART" id="SM01086">
    <property type="entry name" value="ClpB_D2-small"/>
    <property type="match status" value="1"/>
</dbReference>
<dbReference type="SUPFAM" id="SSF52540">
    <property type="entry name" value="P-loop containing nucleoside triphosphate hydrolases"/>
    <property type="match status" value="1"/>
</dbReference>
<name>HSLU_XANAC</name>
<gene>
    <name evidence="1" type="primary">hslU</name>
    <name type="ordered locus">XAC0638</name>
</gene>